<sequence length="172" mass="18828">MRILPARHRQLFKEPFGTLFHSFEEVLKFLPGKTVFSVGDVVTANLLRAGRPPEVAIVDGHTMRQPYPGVNIPEYHQLLVKNPAGGLTEDLIDATQIAASRQGTVIQVEGEEDLAVVPLAMHAPLGTVILYGQPGEGVVLLSITPAMKKRAEELFTCFEEVSTPTAREVFNI</sequence>
<organism>
    <name type="scientific">Methanospirillum hungatei JF-1 (strain ATCC 27890 / DSM 864 / NBRC 100397 / JF-1)</name>
    <dbReference type="NCBI Taxonomy" id="323259"/>
    <lineage>
        <taxon>Archaea</taxon>
        <taxon>Methanobacteriati</taxon>
        <taxon>Methanobacteriota</taxon>
        <taxon>Stenosarchaea group</taxon>
        <taxon>Methanomicrobia</taxon>
        <taxon>Methanomicrobiales</taxon>
        <taxon>Methanospirillaceae</taxon>
        <taxon>Methanospirillum</taxon>
    </lineage>
</organism>
<gene>
    <name type="ordered locus">Mhun_2865</name>
</gene>
<feature type="chain" id="PRO_0000380055" description="GTP-dependent dephospho-CoA kinase">
    <location>
        <begin position="1"/>
        <end position="172"/>
    </location>
</feature>
<feature type="binding site" evidence="1">
    <location>
        <position position="40"/>
    </location>
    <ligand>
        <name>GTP</name>
        <dbReference type="ChEBI" id="CHEBI:37565"/>
    </ligand>
</feature>
<feature type="binding site" evidence="1">
    <location>
        <position position="41"/>
    </location>
    <ligand>
        <name>GTP</name>
        <dbReference type="ChEBI" id="CHEBI:37565"/>
    </ligand>
</feature>
<feature type="binding site" evidence="1">
    <location>
        <position position="42"/>
    </location>
    <ligand>
        <name>GTP</name>
        <dbReference type="ChEBI" id="CHEBI:37565"/>
    </ligand>
</feature>
<feature type="binding site" evidence="1">
    <location>
        <position position="59"/>
    </location>
    <ligand>
        <name>GTP</name>
        <dbReference type="ChEBI" id="CHEBI:37565"/>
    </ligand>
</feature>
<feature type="binding site" evidence="1">
    <location>
        <position position="112"/>
    </location>
    <ligand>
        <name>GTP</name>
        <dbReference type="ChEBI" id="CHEBI:37565"/>
    </ligand>
</feature>
<dbReference type="EC" id="2.7.1.237" evidence="1"/>
<dbReference type="EMBL" id="CP000254">
    <property type="protein sequence ID" value="ABD42557.1"/>
    <property type="molecule type" value="Genomic_DNA"/>
</dbReference>
<dbReference type="RefSeq" id="WP_011449810.1">
    <property type="nucleotide sequence ID" value="NC_007796.1"/>
</dbReference>
<dbReference type="SMR" id="Q2FTM6"/>
<dbReference type="FunCoup" id="Q2FTM6">
    <property type="interactions" value="5"/>
</dbReference>
<dbReference type="STRING" id="323259.Mhun_2865"/>
<dbReference type="EnsemblBacteria" id="ABD42557">
    <property type="protein sequence ID" value="ABD42557"/>
    <property type="gene ID" value="Mhun_2865"/>
</dbReference>
<dbReference type="GeneID" id="3923822"/>
<dbReference type="KEGG" id="mhu:Mhun_2865"/>
<dbReference type="eggNOG" id="arCOG04076">
    <property type="taxonomic scope" value="Archaea"/>
</dbReference>
<dbReference type="HOGENOM" id="CLU_120795_1_0_2"/>
<dbReference type="InParanoid" id="Q2FTM6"/>
<dbReference type="OrthoDB" id="15447at2157"/>
<dbReference type="UniPathway" id="UPA00241"/>
<dbReference type="Proteomes" id="UP000001941">
    <property type="component" value="Chromosome"/>
</dbReference>
<dbReference type="GO" id="GO:0005525">
    <property type="term" value="F:GTP binding"/>
    <property type="evidence" value="ECO:0007669"/>
    <property type="project" value="UniProtKB-UniRule"/>
</dbReference>
<dbReference type="GO" id="GO:0016301">
    <property type="term" value="F:kinase activity"/>
    <property type="evidence" value="ECO:0007669"/>
    <property type="project" value="UniProtKB-UniRule"/>
</dbReference>
<dbReference type="GO" id="GO:0015937">
    <property type="term" value="P:coenzyme A biosynthetic process"/>
    <property type="evidence" value="ECO:0007669"/>
    <property type="project" value="UniProtKB-UniRule"/>
</dbReference>
<dbReference type="HAMAP" id="MF_00590">
    <property type="entry name" value="Dephospho_CoA_kinase_GTP_dep"/>
    <property type="match status" value="1"/>
</dbReference>
<dbReference type="InterPro" id="IPR007164">
    <property type="entry name" value="GTP-dep_dephospho-CoA_kin"/>
</dbReference>
<dbReference type="PANTHER" id="PTHR40732:SF1">
    <property type="entry name" value="GTP-DEPENDENT DEPHOSPHO-COA KINASE"/>
    <property type="match status" value="1"/>
</dbReference>
<dbReference type="PANTHER" id="PTHR40732">
    <property type="entry name" value="UPF0218 PROTEIN TK1697"/>
    <property type="match status" value="1"/>
</dbReference>
<dbReference type="Pfam" id="PF04019">
    <property type="entry name" value="DUF359"/>
    <property type="match status" value="1"/>
</dbReference>
<dbReference type="PIRSF" id="PIRSF006533">
    <property type="entry name" value="UCP006533"/>
    <property type="match status" value="1"/>
</dbReference>
<name>DPCKG_METHJ</name>
<comment type="function">
    <text evidence="1">Catalyzes the GTP-dependent phosphorylation of the 3'-hydroxyl group of dephosphocoenzyme A to form coenzyme A (CoA).</text>
</comment>
<comment type="catalytic activity">
    <reaction evidence="1">
        <text>3'-dephospho-CoA + GTP = GDP + CoA + H(+)</text>
        <dbReference type="Rhea" id="RHEA:61156"/>
        <dbReference type="ChEBI" id="CHEBI:15378"/>
        <dbReference type="ChEBI" id="CHEBI:37565"/>
        <dbReference type="ChEBI" id="CHEBI:57287"/>
        <dbReference type="ChEBI" id="CHEBI:57328"/>
        <dbReference type="ChEBI" id="CHEBI:58189"/>
        <dbReference type="EC" id="2.7.1.237"/>
    </reaction>
</comment>
<comment type="pathway">
    <text evidence="1">Cofactor biosynthesis; coenzyme A biosynthesis.</text>
</comment>
<comment type="similarity">
    <text evidence="1">Belongs to the GTP-dependent DPCK family.</text>
</comment>
<evidence type="ECO:0000255" key="1">
    <source>
        <dbReference type="HAMAP-Rule" id="MF_00590"/>
    </source>
</evidence>
<proteinExistence type="inferred from homology"/>
<reference key="1">
    <citation type="journal article" date="2016" name="Stand. Genomic Sci.">
        <title>Complete genome sequence of Methanospirillum hungatei type strain JF1.</title>
        <authorList>
            <person name="Gunsalus R.P."/>
            <person name="Cook L.E."/>
            <person name="Crable B."/>
            <person name="Rohlin L."/>
            <person name="McDonald E."/>
            <person name="Mouttaki H."/>
            <person name="Sieber J.R."/>
            <person name="Poweleit N."/>
            <person name="Zhou H."/>
            <person name="Lapidus A.L."/>
            <person name="Daligault H.E."/>
            <person name="Land M."/>
            <person name="Gilna P."/>
            <person name="Ivanova N."/>
            <person name="Kyrpides N."/>
            <person name="Culley D.E."/>
            <person name="McInerney M.J."/>
        </authorList>
    </citation>
    <scope>NUCLEOTIDE SEQUENCE [LARGE SCALE GENOMIC DNA]</scope>
    <source>
        <strain>ATCC 27890 / DSM 864 / NBRC 100397 / JF-1</strain>
    </source>
</reference>
<accession>Q2FTM6</accession>
<protein>
    <recommendedName>
        <fullName evidence="1">GTP-dependent dephospho-CoA kinase</fullName>
        <ecNumber evidence="1">2.7.1.237</ecNumber>
    </recommendedName>
    <alternativeName>
        <fullName evidence="1">Dephospho-coenzyme A kinase</fullName>
        <shortName evidence="1">DPCK</shortName>
    </alternativeName>
</protein>
<keyword id="KW-0173">Coenzyme A biosynthesis</keyword>
<keyword id="KW-0342">GTP-binding</keyword>
<keyword id="KW-0418">Kinase</keyword>
<keyword id="KW-0547">Nucleotide-binding</keyword>
<keyword id="KW-1185">Reference proteome</keyword>
<keyword id="KW-0808">Transferase</keyword>